<proteinExistence type="evidence at transcript level"/>
<organism>
    <name type="scientific">Arabidopsis thaliana</name>
    <name type="common">Mouse-ear cress</name>
    <dbReference type="NCBI Taxonomy" id="3702"/>
    <lineage>
        <taxon>Eukaryota</taxon>
        <taxon>Viridiplantae</taxon>
        <taxon>Streptophyta</taxon>
        <taxon>Embryophyta</taxon>
        <taxon>Tracheophyta</taxon>
        <taxon>Spermatophyta</taxon>
        <taxon>Magnoliopsida</taxon>
        <taxon>eudicotyledons</taxon>
        <taxon>Gunneridae</taxon>
        <taxon>Pentapetalae</taxon>
        <taxon>rosids</taxon>
        <taxon>malvids</taxon>
        <taxon>Brassicales</taxon>
        <taxon>Brassicaceae</taxon>
        <taxon>Camelineae</taxon>
        <taxon>Arabidopsis</taxon>
    </lineage>
</organism>
<feature type="transit peptide" description="Chloroplast" evidence="2">
    <location>
        <begin position="1"/>
        <end position="46"/>
    </location>
</feature>
<feature type="chain" id="PRO_0000014460" description="Translation initiation factor IF-1, chloroplastic">
    <location>
        <begin position="47"/>
        <end position="141"/>
    </location>
</feature>
<feature type="domain" description="S1-like">
    <location>
        <begin position="63"/>
        <end position="138"/>
    </location>
</feature>
<feature type="region of interest" description="Disordered" evidence="3">
    <location>
        <begin position="49"/>
        <end position="69"/>
    </location>
</feature>
<accession>O82499</accession>
<accession>Q56YK9</accession>
<accession>Q8GY59</accession>
<accession>Q9T016</accession>
<name>IF1C_ARATH</name>
<comment type="function">
    <text evidence="1">One of the essential components for the initiation of protein synthesis. Stabilizes the binding of IF-2 and IF-3 on the 30S subunit to which N-formylmethionyl-tRNA(fMet) subsequently binds. Helps modulate mRNA selection, yielding the 30S pre-initiation complex (PIC). Upon addition of the 50S ribosomal subunit IF-1, IF-2 and IF-3 are released leaving the mature 70S translation initiation complex.</text>
</comment>
<comment type="subunit">
    <text evidence="1">Component of the 30S ribosomal translation pre-initiation complex which assembles on the 30S ribosome in the order IF-2 and IF-3, IF-1 and N-formylmethionyl-tRNA(fMet); mRNA recruitment can occur at any time during PIC assembly.</text>
</comment>
<comment type="subcellular location">
    <subcellularLocation>
        <location evidence="4">Plastid</location>
        <location evidence="4">Chloroplast</location>
    </subcellularLocation>
</comment>
<comment type="similarity">
    <text evidence="5">Belongs to the IF-1 family.</text>
</comment>
<comment type="sequence caution" evidence="5">
    <conflict type="erroneous gene model prediction">
        <sequence resource="EMBL-CDS" id="AAC35543"/>
    </conflict>
    <text>The predicted gene At4g11170 has been split into 2 genes: At4g11175 and At4g11170.</text>
</comment>
<comment type="sequence caution" evidence="5">
    <conflict type="erroneous initiation">
        <sequence resource="EMBL-CDS" id="BAD94083"/>
    </conflict>
    <text>Truncated N-terminus.</text>
</comment>
<comment type="sequence caution" evidence="5">
    <conflict type="erroneous gene model prediction">
        <sequence resource="EMBL-CDS" id="CAB43052"/>
    </conflict>
    <text>The predicted gene At4g11170 has been split into 2 genes: At4g11175 and At4g11170.</text>
</comment>
<comment type="sequence caution" evidence="5">
    <conflict type="erroneous gene model prediction">
        <sequence resource="EMBL-CDS" id="CAB81218"/>
    </conflict>
    <text>The predicted gene At4g11170 has been split into 2 genes: At4g11175 and At4g11170.</text>
</comment>
<gene>
    <name type="ordered locus">At4g11175</name>
    <name type="ORF">F2P3.7</name>
    <name type="ORF">T22B4.1</name>
</gene>
<evidence type="ECO:0000250" key="1">
    <source>
        <dbReference type="UniProtKB" id="P69222"/>
    </source>
</evidence>
<evidence type="ECO:0000255" key="2"/>
<evidence type="ECO:0000256" key="3">
    <source>
        <dbReference type="SAM" id="MobiDB-lite"/>
    </source>
</evidence>
<evidence type="ECO:0000269" key="4">
    <source>
    </source>
</evidence>
<evidence type="ECO:0000305" key="5"/>
<dbReference type="EMBL" id="AF080120">
    <property type="protein sequence ID" value="AAC35543.1"/>
    <property type="status" value="ALT_SEQ"/>
    <property type="molecule type" value="Genomic_DNA"/>
</dbReference>
<dbReference type="EMBL" id="AL049876">
    <property type="protein sequence ID" value="CAB43052.1"/>
    <property type="status" value="ALT_SEQ"/>
    <property type="molecule type" value="Genomic_DNA"/>
</dbReference>
<dbReference type="EMBL" id="AL161531">
    <property type="protein sequence ID" value="CAB81218.1"/>
    <property type="status" value="ALT_SEQ"/>
    <property type="molecule type" value="Genomic_DNA"/>
</dbReference>
<dbReference type="EMBL" id="CP002687">
    <property type="protein sequence ID" value="AEE82981.1"/>
    <property type="molecule type" value="Genomic_DNA"/>
</dbReference>
<dbReference type="EMBL" id="BT003712">
    <property type="protein sequence ID" value="AAO39940.1"/>
    <property type="molecule type" value="mRNA"/>
</dbReference>
<dbReference type="EMBL" id="AK117848">
    <property type="protein sequence ID" value="BAC42489.1"/>
    <property type="molecule type" value="mRNA"/>
</dbReference>
<dbReference type="EMBL" id="AK221313">
    <property type="protein sequence ID" value="BAD94083.1"/>
    <property type="status" value="ALT_INIT"/>
    <property type="molecule type" value="mRNA"/>
</dbReference>
<dbReference type="PIR" id="T01915">
    <property type="entry name" value="T01915"/>
</dbReference>
<dbReference type="PIR" id="T08196">
    <property type="entry name" value="T08196"/>
</dbReference>
<dbReference type="RefSeq" id="NP_192856.1">
    <property type="nucleotide sequence ID" value="NM_117188.5"/>
</dbReference>
<dbReference type="SMR" id="O82499"/>
<dbReference type="BioGRID" id="12018">
    <property type="interactions" value="2"/>
</dbReference>
<dbReference type="FunCoup" id="O82499">
    <property type="interactions" value="611"/>
</dbReference>
<dbReference type="IntAct" id="O82499">
    <property type="interactions" value="4"/>
</dbReference>
<dbReference type="STRING" id="3702.O82499"/>
<dbReference type="MetOSite" id="O82499"/>
<dbReference type="PaxDb" id="3702-AT4G11175.1"/>
<dbReference type="ProteomicsDB" id="228871"/>
<dbReference type="EnsemblPlants" id="AT4G11175.1">
    <property type="protein sequence ID" value="AT4G11175.1"/>
    <property type="gene ID" value="AT4G11175"/>
</dbReference>
<dbReference type="GeneID" id="826719"/>
<dbReference type="Gramene" id="AT4G11175.1">
    <property type="protein sequence ID" value="AT4G11175.1"/>
    <property type="gene ID" value="AT4G11175"/>
</dbReference>
<dbReference type="KEGG" id="ath:AT4G11175"/>
<dbReference type="Araport" id="AT4G11175"/>
<dbReference type="TAIR" id="AT4G11175"/>
<dbReference type="eggNOG" id="ENOG502S8M9">
    <property type="taxonomic scope" value="Eukaryota"/>
</dbReference>
<dbReference type="HOGENOM" id="CLU_120213_0_0_1"/>
<dbReference type="InParanoid" id="O82499"/>
<dbReference type="OMA" id="IIFRMSS"/>
<dbReference type="PhylomeDB" id="O82499"/>
<dbReference type="PRO" id="PR:O82499"/>
<dbReference type="Proteomes" id="UP000006548">
    <property type="component" value="Chromosome 4"/>
</dbReference>
<dbReference type="ExpressionAtlas" id="O82499">
    <property type="expression patterns" value="baseline and differential"/>
</dbReference>
<dbReference type="GO" id="GO:0009507">
    <property type="term" value="C:chloroplast"/>
    <property type="evidence" value="ECO:0007005"/>
    <property type="project" value="TAIR"/>
</dbReference>
<dbReference type="GO" id="GO:0005829">
    <property type="term" value="C:cytosol"/>
    <property type="evidence" value="ECO:0007005"/>
    <property type="project" value="TAIR"/>
</dbReference>
<dbReference type="GO" id="GO:0003729">
    <property type="term" value="F:mRNA binding"/>
    <property type="evidence" value="ECO:0000314"/>
    <property type="project" value="TAIR"/>
</dbReference>
<dbReference type="GO" id="GO:0003743">
    <property type="term" value="F:translation initiation factor activity"/>
    <property type="evidence" value="ECO:0007669"/>
    <property type="project" value="UniProtKB-KW"/>
</dbReference>
<dbReference type="CDD" id="cd04451">
    <property type="entry name" value="S1_IF1"/>
    <property type="match status" value="1"/>
</dbReference>
<dbReference type="FunFam" id="2.40.50.140:FF:000002">
    <property type="entry name" value="Translation initiation factor IF-1"/>
    <property type="match status" value="1"/>
</dbReference>
<dbReference type="Gene3D" id="2.40.50.140">
    <property type="entry name" value="Nucleic acid-binding proteins"/>
    <property type="match status" value="1"/>
</dbReference>
<dbReference type="HAMAP" id="MF_00075">
    <property type="entry name" value="IF_1"/>
    <property type="match status" value="1"/>
</dbReference>
<dbReference type="InterPro" id="IPR012340">
    <property type="entry name" value="NA-bd_OB-fold"/>
</dbReference>
<dbReference type="InterPro" id="IPR006196">
    <property type="entry name" value="RNA-binding_domain_S1_IF1"/>
</dbReference>
<dbReference type="InterPro" id="IPR003029">
    <property type="entry name" value="S1_domain"/>
</dbReference>
<dbReference type="InterPro" id="IPR004368">
    <property type="entry name" value="TIF_IF1"/>
</dbReference>
<dbReference type="NCBIfam" id="TIGR00008">
    <property type="entry name" value="infA"/>
    <property type="match status" value="1"/>
</dbReference>
<dbReference type="PANTHER" id="PTHR33370">
    <property type="entry name" value="TRANSLATION INITIATION FACTOR IF-1, CHLOROPLASTIC"/>
    <property type="match status" value="1"/>
</dbReference>
<dbReference type="PANTHER" id="PTHR33370:SF1">
    <property type="entry name" value="TRANSLATION INITIATION FACTOR IF-1, CHLOROPLASTIC"/>
    <property type="match status" value="1"/>
</dbReference>
<dbReference type="Pfam" id="PF01176">
    <property type="entry name" value="eIF-1a"/>
    <property type="match status" value="1"/>
</dbReference>
<dbReference type="SMART" id="SM00316">
    <property type="entry name" value="S1"/>
    <property type="match status" value="1"/>
</dbReference>
<dbReference type="SUPFAM" id="SSF50249">
    <property type="entry name" value="Nucleic acid-binding proteins"/>
    <property type="match status" value="1"/>
</dbReference>
<dbReference type="PROSITE" id="PS50832">
    <property type="entry name" value="S1_IF1_TYPE"/>
    <property type="match status" value="1"/>
</dbReference>
<reference key="1">
    <citation type="journal article" date="1999" name="Nature">
        <title>Sequence and analysis of chromosome 4 of the plant Arabidopsis thaliana.</title>
        <authorList>
            <person name="Mayer K.F.X."/>
            <person name="Schueller C."/>
            <person name="Wambutt R."/>
            <person name="Murphy G."/>
            <person name="Volckaert G."/>
            <person name="Pohl T."/>
            <person name="Duesterhoeft A."/>
            <person name="Stiekema W."/>
            <person name="Entian K.-D."/>
            <person name="Terryn N."/>
            <person name="Harris B."/>
            <person name="Ansorge W."/>
            <person name="Brandt P."/>
            <person name="Grivell L.A."/>
            <person name="Rieger M."/>
            <person name="Weichselgartner M."/>
            <person name="de Simone V."/>
            <person name="Obermaier B."/>
            <person name="Mache R."/>
            <person name="Mueller M."/>
            <person name="Kreis M."/>
            <person name="Delseny M."/>
            <person name="Puigdomenech P."/>
            <person name="Watson M."/>
            <person name="Schmidtheini T."/>
            <person name="Reichert B."/>
            <person name="Portetelle D."/>
            <person name="Perez-Alonso M."/>
            <person name="Boutry M."/>
            <person name="Bancroft I."/>
            <person name="Vos P."/>
            <person name="Hoheisel J."/>
            <person name="Zimmermann W."/>
            <person name="Wedler H."/>
            <person name="Ridley P."/>
            <person name="Langham S.-A."/>
            <person name="McCullagh B."/>
            <person name="Bilham L."/>
            <person name="Robben J."/>
            <person name="van der Schueren J."/>
            <person name="Grymonprez B."/>
            <person name="Chuang Y.-J."/>
            <person name="Vandenbussche F."/>
            <person name="Braeken M."/>
            <person name="Weltjens I."/>
            <person name="Voet M."/>
            <person name="Bastiaens I."/>
            <person name="Aert R."/>
            <person name="Defoor E."/>
            <person name="Weitzenegger T."/>
            <person name="Bothe G."/>
            <person name="Ramsperger U."/>
            <person name="Hilbert H."/>
            <person name="Braun M."/>
            <person name="Holzer E."/>
            <person name="Brandt A."/>
            <person name="Peters S."/>
            <person name="van Staveren M."/>
            <person name="Dirkse W."/>
            <person name="Mooijman P."/>
            <person name="Klein Lankhorst R."/>
            <person name="Rose M."/>
            <person name="Hauf J."/>
            <person name="Koetter P."/>
            <person name="Berneiser S."/>
            <person name="Hempel S."/>
            <person name="Feldpausch M."/>
            <person name="Lamberth S."/>
            <person name="Van den Daele H."/>
            <person name="De Keyser A."/>
            <person name="Buysshaert C."/>
            <person name="Gielen J."/>
            <person name="Villarroel R."/>
            <person name="De Clercq R."/>
            <person name="van Montagu M."/>
            <person name="Rogers J."/>
            <person name="Cronin A."/>
            <person name="Quail M.A."/>
            <person name="Bray-Allen S."/>
            <person name="Clark L."/>
            <person name="Doggett J."/>
            <person name="Hall S."/>
            <person name="Kay M."/>
            <person name="Lennard N."/>
            <person name="McLay K."/>
            <person name="Mayes R."/>
            <person name="Pettett A."/>
            <person name="Rajandream M.A."/>
            <person name="Lyne M."/>
            <person name="Benes V."/>
            <person name="Rechmann S."/>
            <person name="Borkova D."/>
            <person name="Bloecker H."/>
            <person name="Scharfe M."/>
            <person name="Grimm M."/>
            <person name="Loehnert T.-H."/>
            <person name="Dose S."/>
            <person name="de Haan M."/>
            <person name="Maarse A.C."/>
            <person name="Schaefer M."/>
            <person name="Mueller-Auer S."/>
            <person name="Gabel C."/>
            <person name="Fuchs M."/>
            <person name="Fartmann B."/>
            <person name="Granderath K."/>
            <person name="Dauner D."/>
            <person name="Herzl A."/>
            <person name="Neumann S."/>
            <person name="Argiriou A."/>
            <person name="Vitale D."/>
            <person name="Liguori R."/>
            <person name="Piravandi E."/>
            <person name="Massenet O."/>
            <person name="Quigley F."/>
            <person name="Clabauld G."/>
            <person name="Muendlein A."/>
            <person name="Felber R."/>
            <person name="Schnabl S."/>
            <person name="Hiller R."/>
            <person name="Schmidt W."/>
            <person name="Lecharny A."/>
            <person name="Aubourg S."/>
            <person name="Chefdor F."/>
            <person name="Cooke R."/>
            <person name="Berger C."/>
            <person name="Monfort A."/>
            <person name="Casacuberta E."/>
            <person name="Gibbons T."/>
            <person name="Weber N."/>
            <person name="Vandenbol M."/>
            <person name="Bargues M."/>
            <person name="Terol J."/>
            <person name="Torres A."/>
            <person name="Perez-Perez A."/>
            <person name="Purnelle B."/>
            <person name="Bent E."/>
            <person name="Johnson S."/>
            <person name="Tacon D."/>
            <person name="Jesse T."/>
            <person name="Heijnen L."/>
            <person name="Schwarz S."/>
            <person name="Scholler P."/>
            <person name="Heber S."/>
            <person name="Francs P."/>
            <person name="Bielke C."/>
            <person name="Frishman D."/>
            <person name="Haase D."/>
            <person name="Lemcke K."/>
            <person name="Mewes H.-W."/>
            <person name="Stocker S."/>
            <person name="Zaccaria P."/>
            <person name="Bevan M."/>
            <person name="Wilson R.K."/>
            <person name="de la Bastide M."/>
            <person name="Habermann K."/>
            <person name="Parnell L."/>
            <person name="Dedhia N."/>
            <person name="Gnoj L."/>
            <person name="Schutz K."/>
            <person name="Huang E."/>
            <person name="Spiegel L."/>
            <person name="Sekhon M."/>
            <person name="Murray J."/>
            <person name="Sheet P."/>
            <person name="Cordes M."/>
            <person name="Abu-Threideh J."/>
            <person name="Stoneking T."/>
            <person name="Kalicki J."/>
            <person name="Graves T."/>
            <person name="Harmon G."/>
            <person name="Edwards J."/>
            <person name="Latreille P."/>
            <person name="Courtney L."/>
            <person name="Cloud J."/>
            <person name="Abbott A."/>
            <person name="Scott K."/>
            <person name="Johnson D."/>
            <person name="Minx P."/>
            <person name="Bentley D."/>
            <person name="Fulton B."/>
            <person name="Miller N."/>
            <person name="Greco T."/>
            <person name="Kemp K."/>
            <person name="Kramer J."/>
            <person name="Fulton L."/>
            <person name="Mardis E."/>
            <person name="Dante M."/>
            <person name="Pepin K."/>
            <person name="Hillier L.W."/>
            <person name="Nelson J."/>
            <person name="Spieth J."/>
            <person name="Ryan E."/>
            <person name="Andrews S."/>
            <person name="Geisel C."/>
            <person name="Layman D."/>
            <person name="Du H."/>
            <person name="Ali J."/>
            <person name="Berghoff A."/>
            <person name="Jones K."/>
            <person name="Drone K."/>
            <person name="Cotton M."/>
            <person name="Joshu C."/>
            <person name="Antonoiu B."/>
            <person name="Zidanic M."/>
            <person name="Strong C."/>
            <person name="Sun H."/>
            <person name="Lamar B."/>
            <person name="Yordan C."/>
            <person name="Ma P."/>
            <person name="Zhong J."/>
            <person name="Preston R."/>
            <person name="Vil D."/>
            <person name="Shekher M."/>
            <person name="Matero A."/>
            <person name="Shah R."/>
            <person name="Swaby I.K."/>
            <person name="O'Shaughnessy A."/>
            <person name="Rodriguez M."/>
            <person name="Hoffman J."/>
            <person name="Till S."/>
            <person name="Granat S."/>
            <person name="Shohdy N."/>
            <person name="Hasegawa A."/>
            <person name="Hameed A."/>
            <person name="Lodhi M."/>
            <person name="Johnson A."/>
            <person name="Chen E."/>
            <person name="Marra M.A."/>
            <person name="Martienssen R."/>
            <person name="McCombie W.R."/>
        </authorList>
    </citation>
    <scope>NUCLEOTIDE SEQUENCE [LARGE SCALE GENOMIC DNA]</scope>
    <source>
        <strain>cv. Columbia</strain>
    </source>
</reference>
<reference key="2">
    <citation type="journal article" date="2017" name="Plant J.">
        <title>Araport11: a complete reannotation of the Arabidopsis thaliana reference genome.</title>
        <authorList>
            <person name="Cheng C.Y."/>
            <person name="Krishnakumar V."/>
            <person name="Chan A.P."/>
            <person name="Thibaud-Nissen F."/>
            <person name="Schobel S."/>
            <person name="Town C.D."/>
        </authorList>
    </citation>
    <scope>GENOME REANNOTATION</scope>
    <source>
        <strain>cv. Columbia</strain>
    </source>
</reference>
<reference key="3">
    <citation type="journal article" date="2003" name="Science">
        <title>Empirical analysis of transcriptional activity in the Arabidopsis genome.</title>
        <authorList>
            <person name="Yamada K."/>
            <person name="Lim J."/>
            <person name="Dale J.M."/>
            <person name="Chen H."/>
            <person name="Shinn P."/>
            <person name="Palm C.J."/>
            <person name="Southwick A.M."/>
            <person name="Wu H.C."/>
            <person name="Kim C.J."/>
            <person name="Nguyen M."/>
            <person name="Pham P.K."/>
            <person name="Cheuk R.F."/>
            <person name="Karlin-Newmann G."/>
            <person name="Liu S.X."/>
            <person name="Lam B."/>
            <person name="Sakano H."/>
            <person name="Wu T."/>
            <person name="Yu G."/>
            <person name="Miranda M."/>
            <person name="Quach H.L."/>
            <person name="Tripp M."/>
            <person name="Chang C.H."/>
            <person name="Lee J.M."/>
            <person name="Toriumi M.J."/>
            <person name="Chan M.M."/>
            <person name="Tang C.C."/>
            <person name="Onodera C.S."/>
            <person name="Deng J.M."/>
            <person name="Akiyama K."/>
            <person name="Ansari Y."/>
            <person name="Arakawa T."/>
            <person name="Banh J."/>
            <person name="Banno F."/>
            <person name="Bowser L."/>
            <person name="Brooks S.Y."/>
            <person name="Carninci P."/>
            <person name="Chao Q."/>
            <person name="Choy N."/>
            <person name="Enju A."/>
            <person name="Goldsmith A.D."/>
            <person name="Gurjal M."/>
            <person name="Hansen N.F."/>
            <person name="Hayashizaki Y."/>
            <person name="Johnson-Hopson C."/>
            <person name="Hsuan V.W."/>
            <person name="Iida K."/>
            <person name="Karnes M."/>
            <person name="Khan S."/>
            <person name="Koesema E."/>
            <person name="Ishida J."/>
            <person name="Jiang P.X."/>
            <person name="Jones T."/>
            <person name="Kawai J."/>
            <person name="Kamiya A."/>
            <person name="Meyers C."/>
            <person name="Nakajima M."/>
            <person name="Narusaka M."/>
            <person name="Seki M."/>
            <person name="Sakurai T."/>
            <person name="Satou M."/>
            <person name="Tamse R."/>
            <person name="Vaysberg M."/>
            <person name="Wallender E.K."/>
            <person name="Wong C."/>
            <person name="Yamamura Y."/>
            <person name="Yuan S."/>
            <person name="Shinozaki K."/>
            <person name="Davis R.W."/>
            <person name="Theologis A."/>
            <person name="Ecker J.R."/>
        </authorList>
    </citation>
    <scope>NUCLEOTIDE SEQUENCE [LARGE SCALE MRNA]</scope>
    <source>
        <strain>cv. Columbia</strain>
    </source>
</reference>
<reference key="4">
    <citation type="journal article" date="2002" name="Science">
        <title>Functional annotation of a full-length Arabidopsis cDNA collection.</title>
        <authorList>
            <person name="Seki M."/>
            <person name="Narusaka M."/>
            <person name="Kamiya A."/>
            <person name="Ishida J."/>
            <person name="Satou M."/>
            <person name="Sakurai T."/>
            <person name="Nakajima M."/>
            <person name="Enju A."/>
            <person name="Akiyama K."/>
            <person name="Oono Y."/>
            <person name="Muramatsu M."/>
            <person name="Hayashizaki Y."/>
            <person name="Kawai J."/>
            <person name="Carninci P."/>
            <person name="Itoh M."/>
            <person name="Ishii Y."/>
            <person name="Arakawa T."/>
            <person name="Shibata K."/>
            <person name="Shinagawa A."/>
            <person name="Shinozaki K."/>
        </authorList>
    </citation>
    <scope>NUCLEOTIDE SEQUENCE [LARGE SCALE MRNA]</scope>
    <source>
        <strain>cv. Columbia</strain>
    </source>
</reference>
<reference key="5">
    <citation type="submission" date="2005-03" db="EMBL/GenBank/DDBJ databases">
        <title>Large-scale analysis of RIKEN Arabidopsis full-length (RAFL) cDNAs.</title>
        <authorList>
            <person name="Totoki Y."/>
            <person name="Seki M."/>
            <person name="Ishida J."/>
            <person name="Nakajima M."/>
            <person name="Enju A."/>
            <person name="Kamiya A."/>
            <person name="Narusaka M."/>
            <person name="Shin-i T."/>
            <person name="Nakagawa M."/>
            <person name="Sakamoto N."/>
            <person name="Oishi K."/>
            <person name="Kohara Y."/>
            <person name="Kobayashi M."/>
            <person name="Toyoda A."/>
            <person name="Sakaki Y."/>
            <person name="Sakurai T."/>
            <person name="Iida K."/>
            <person name="Akiyama K."/>
            <person name="Satou M."/>
            <person name="Toyoda T."/>
            <person name="Konagaya A."/>
            <person name="Carninci P."/>
            <person name="Kawai J."/>
            <person name="Hayashizaki Y."/>
            <person name="Shinozaki K."/>
        </authorList>
    </citation>
    <scope>NUCLEOTIDE SEQUENCE [LARGE SCALE MRNA]</scope>
    <source>
        <strain>cv. Columbia</strain>
    </source>
</reference>
<reference key="6">
    <citation type="journal article" date="2001" name="Plant Cell">
        <title>Many parallel losses of infA from chloroplast DNA during angiosperm evolution with multiple independent transfers to the nucleus.</title>
        <authorList>
            <person name="Millen R.S."/>
            <person name="Olmstead R.G."/>
            <person name="Adams K.L."/>
            <person name="Palmer J.D."/>
            <person name="Lao N.T."/>
            <person name="Heggie L."/>
            <person name="Kavanagh T.A."/>
            <person name="Hibberd J.M."/>
            <person name="Gray J.C."/>
            <person name="Morden C.W."/>
            <person name="Calie P.J."/>
            <person name="Jermiin L.S."/>
            <person name="Wolfe K.H."/>
        </authorList>
    </citation>
    <scope>TARGETING TO CHLOROPLASTS</scope>
    <scope>SUBCELLULAR LOCATION</scope>
</reference>
<protein>
    <recommendedName>
        <fullName>Translation initiation factor IF-1, chloroplastic</fullName>
    </recommendedName>
</protein>
<keyword id="KW-0150">Chloroplast</keyword>
<keyword id="KW-0396">Initiation factor</keyword>
<keyword id="KW-0934">Plastid</keyword>
<keyword id="KW-0648">Protein biosynthesis</keyword>
<keyword id="KW-1185">Reference proteome</keyword>
<keyword id="KW-0809">Transit peptide</keyword>
<sequence>MLQLCSTFRPQLLLPCQFRFTNGVLIPQINYVASNSVVNIRPMIRCQRASGGRGGANRSKPAKPQVKEGSNKTVIEGLVTESLPNGMFRVDLENGDNILGYICGKIRKNFIRILPGDKVKVEMSVYDSTKGRIIFRMSSRD</sequence>